<protein>
    <recommendedName>
        <fullName evidence="1">Homoserine kinase</fullName>
        <shortName evidence="1">HK</shortName>
        <shortName evidence="1">HSK</shortName>
        <ecNumber evidence="1">2.7.1.39</ecNumber>
    </recommendedName>
</protein>
<reference key="1">
    <citation type="journal article" date="2007" name="J. Bacteriol.">
        <title>Genome of the opportunistic pathogen Streptococcus sanguinis.</title>
        <authorList>
            <person name="Xu P."/>
            <person name="Alves J.M."/>
            <person name="Kitten T."/>
            <person name="Brown A."/>
            <person name="Chen Z."/>
            <person name="Ozaki L.S."/>
            <person name="Manque P."/>
            <person name="Ge X."/>
            <person name="Serrano M.G."/>
            <person name="Puiu D."/>
            <person name="Hendricks S."/>
            <person name="Wang Y."/>
            <person name="Chaplin M.D."/>
            <person name="Akan D."/>
            <person name="Paik S."/>
            <person name="Peterson D.L."/>
            <person name="Macrina F.L."/>
            <person name="Buck G.A."/>
        </authorList>
    </citation>
    <scope>NUCLEOTIDE SEQUENCE [LARGE SCALE GENOMIC DNA]</scope>
    <source>
        <strain>SK36</strain>
    </source>
</reference>
<organism>
    <name type="scientific">Streptococcus sanguinis (strain SK36)</name>
    <dbReference type="NCBI Taxonomy" id="388919"/>
    <lineage>
        <taxon>Bacteria</taxon>
        <taxon>Bacillati</taxon>
        <taxon>Bacillota</taxon>
        <taxon>Bacilli</taxon>
        <taxon>Lactobacillales</taxon>
        <taxon>Streptococcaceae</taxon>
        <taxon>Streptococcus</taxon>
    </lineage>
</organism>
<feature type="chain" id="PRO_1000049176" description="Homoserine kinase">
    <location>
        <begin position="1"/>
        <end position="288"/>
    </location>
</feature>
<feature type="binding site" evidence="1">
    <location>
        <begin position="79"/>
        <end position="89"/>
    </location>
    <ligand>
        <name>ATP</name>
        <dbReference type="ChEBI" id="CHEBI:30616"/>
    </ligand>
</feature>
<keyword id="KW-0028">Amino-acid biosynthesis</keyword>
<keyword id="KW-0067">ATP-binding</keyword>
<keyword id="KW-0963">Cytoplasm</keyword>
<keyword id="KW-0418">Kinase</keyword>
<keyword id="KW-0547">Nucleotide-binding</keyword>
<keyword id="KW-1185">Reference proteome</keyword>
<keyword id="KW-0791">Threonine biosynthesis</keyword>
<keyword id="KW-0808">Transferase</keyword>
<gene>
    <name evidence="1" type="primary">thrB</name>
    <name type="ordered locus">SSA_1044</name>
</gene>
<proteinExistence type="inferred from homology"/>
<comment type="function">
    <text evidence="1">Catalyzes the ATP-dependent phosphorylation of L-homoserine to L-homoserine phosphate.</text>
</comment>
<comment type="catalytic activity">
    <reaction evidence="1">
        <text>L-homoserine + ATP = O-phospho-L-homoserine + ADP + H(+)</text>
        <dbReference type="Rhea" id="RHEA:13985"/>
        <dbReference type="ChEBI" id="CHEBI:15378"/>
        <dbReference type="ChEBI" id="CHEBI:30616"/>
        <dbReference type="ChEBI" id="CHEBI:57476"/>
        <dbReference type="ChEBI" id="CHEBI:57590"/>
        <dbReference type="ChEBI" id="CHEBI:456216"/>
        <dbReference type="EC" id="2.7.1.39"/>
    </reaction>
</comment>
<comment type="pathway">
    <text evidence="1">Amino-acid biosynthesis; L-threonine biosynthesis; L-threonine from L-aspartate: step 4/5.</text>
</comment>
<comment type="subcellular location">
    <subcellularLocation>
        <location evidence="1">Cytoplasm</location>
    </subcellularLocation>
</comment>
<comment type="similarity">
    <text evidence="1">Belongs to the GHMP kinase family. Homoserine kinase subfamily.</text>
</comment>
<evidence type="ECO:0000255" key="1">
    <source>
        <dbReference type="HAMAP-Rule" id="MF_00384"/>
    </source>
</evidence>
<accession>A3CMQ4</accession>
<sequence length="288" mass="31780">MKIIVPATSANIGPGFDSVGVALSKYLEIEVLEESQEWVIEHDLNPRIPKDRRNLLVKIALQLAPDIQPRRLKMTSDIPLARGLGSSSSVIVAGIELANQLAHLNLSDYQKLKIATKIEGHPDNVAPAIYGNLVVSSSSRNQVSAVVADFPDADFIAYIPDYELRTVESRQVLPNRLSYKEAVAASSIANVAIAALLKGDMKIAGRAIESDLFHEKYRQPLIKEFSDIKFLARKNGSYATYISGAGPTVMVLSPKHKTETIYQLLQKQNFKGQIFRLQVDTEGVRVEK</sequence>
<dbReference type="EC" id="2.7.1.39" evidence="1"/>
<dbReference type="EMBL" id="CP000387">
    <property type="protein sequence ID" value="ABN44459.1"/>
    <property type="molecule type" value="Genomic_DNA"/>
</dbReference>
<dbReference type="RefSeq" id="WP_011836886.1">
    <property type="nucleotide sequence ID" value="NC_009009.1"/>
</dbReference>
<dbReference type="RefSeq" id="YP_001035009.1">
    <property type="nucleotide sequence ID" value="NC_009009.1"/>
</dbReference>
<dbReference type="SMR" id="A3CMQ4"/>
<dbReference type="STRING" id="388919.SSA_1044"/>
<dbReference type="KEGG" id="ssa:SSA_1044"/>
<dbReference type="PATRIC" id="fig|388919.9.peg.991"/>
<dbReference type="eggNOG" id="COG0083">
    <property type="taxonomic scope" value="Bacteria"/>
</dbReference>
<dbReference type="HOGENOM" id="CLU_041243_0_0_9"/>
<dbReference type="OrthoDB" id="9769912at2"/>
<dbReference type="UniPathway" id="UPA00050">
    <property type="reaction ID" value="UER00064"/>
</dbReference>
<dbReference type="Proteomes" id="UP000002148">
    <property type="component" value="Chromosome"/>
</dbReference>
<dbReference type="GO" id="GO:0005737">
    <property type="term" value="C:cytoplasm"/>
    <property type="evidence" value="ECO:0007669"/>
    <property type="project" value="UniProtKB-SubCell"/>
</dbReference>
<dbReference type="GO" id="GO:0005524">
    <property type="term" value="F:ATP binding"/>
    <property type="evidence" value="ECO:0007669"/>
    <property type="project" value="UniProtKB-UniRule"/>
</dbReference>
<dbReference type="GO" id="GO:0004413">
    <property type="term" value="F:homoserine kinase activity"/>
    <property type="evidence" value="ECO:0007669"/>
    <property type="project" value="UniProtKB-UniRule"/>
</dbReference>
<dbReference type="GO" id="GO:0009088">
    <property type="term" value="P:threonine biosynthetic process"/>
    <property type="evidence" value="ECO:0007669"/>
    <property type="project" value="UniProtKB-UniRule"/>
</dbReference>
<dbReference type="Gene3D" id="3.30.230.10">
    <property type="match status" value="1"/>
</dbReference>
<dbReference type="Gene3D" id="3.30.70.890">
    <property type="entry name" value="GHMP kinase, C-terminal domain"/>
    <property type="match status" value="1"/>
</dbReference>
<dbReference type="HAMAP" id="MF_00384">
    <property type="entry name" value="Homoser_kinase"/>
    <property type="match status" value="1"/>
</dbReference>
<dbReference type="InterPro" id="IPR013750">
    <property type="entry name" value="GHMP_kinase_C_dom"/>
</dbReference>
<dbReference type="InterPro" id="IPR036554">
    <property type="entry name" value="GHMP_kinase_C_sf"/>
</dbReference>
<dbReference type="InterPro" id="IPR006204">
    <property type="entry name" value="GHMP_kinase_N_dom"/>
</dbReference>
<dbReference type="InterPro" id="IPR006203">
    <property type="entry name" value="GHMP_knse_ATP-bd_CS"/>
</dbReference>
<dbReference type="InterPro" id="IPR000870">
    <property type="entry name" value="Homoserine_kinase"/>
</dbReference>
<dbReference type="InterPro" id="IPR020568">
    <property type="entry name" value="Ribosomal_Su5_D2-typ_SF"/>
</dbReference>
<dbReference type="InterPro" id="IPR014721">
    <property type="entry name" value="Ribsml_uS5_D2-typ_fold_subgr"/>
</dbReference>
<dbReference type="NCBIfam" id="TIGR00191">
    <property type="entry name" value="thrB"/>
    <property type="match status" value="1"/>
</dbReference>
<dbReference type="PANTHER" id="PTHR20861:SF1">
    <property type="entry name" value="HOMOSERINE KINASE"/>
    <property type="match status" value="1"/>
</dbReference>
<dbReference type="PANTHER" id="PTHR20861">
    <property type="entry name" value="HOMOSERINE/4-DIPHOSPHOCYTIDYL-2-C-METHYL-D-ERYTHRITOL KINASE"/>
    <property type="match status" value="1"/>
</dbReference>
<dbReference type="Pfam" id="PF08544">
    <property type="entry name" value="GHMP_kinases_C"/>
    <property type="match status" value="1"/>
</dbReference>
<dbReference type="Pfam" id="PF00288">
    <property type="entry name" value="GHMP_kinases_N"/>
    <property type="match status" value="1"/>
</dbReference>
<dbReference type="PIRSF" id="PIRSF000676">
    <property type="entry name" value="Homoser_kin"/>
    <property type="match status" value="1"/>
</dbReference>
<dbReference type="PRINTS" id="PR00958">
    <property type="entry name" value="HOMSERKINASE"/>
</dbReference>
<dbReference type="SUPFAM" id="SSF55060">
    <property type="entry name" value="GHMP Kinase, C-terminal domain"/>
    <property type="match status" value="1"/>
</dbReference>
<dbReference type="SUPFAM" id="SSF54211">
    <property type="entry name" value="Ribosomal protein S5 domain 2-like"/>
    <property type="match status" value="1"/>
</dbReference>
<dbReference type="PROSITE" id="PS00627">
    <property type="entry name" value="GHMP_KINASES_ATP"/>
    <property type="match status" value="1"/>
</dbReference>
<name>KHSE_STRSV</name>